<proteinExistence type="evidence at transcript level"/>
<reference key="1">
    <citation type="journal article" date="2003" name="Nucleic Acids Res.">
        <title>The complete nucleotide sequence of the hornwort (Anthoceros formosae) chloroplast genome: insight into the earliest land plants.</title>
        <authorList>
            <person name="Kugita M."/>
            <person name="Kaneko A."/>
            <person name="Yamamoto Y."/>
            <person name="Takeya Y."/>
            <person name="Matsumoto T."/>
            <person name="Yoshinaga K."/>
        </authorList>
    </citation>
    <scope>NUCLEOTIDE SEQUENCE [LARGE SCALE GENOMIC DNA]</scope>
    <scope>RNA EDITING</scope>
</reference>
<reference key="2">
    <citation type="journal article" date="2003" name="Nucleic Acids Res.">
        <title>RNA editing in hornwort chloroplasts makes more than half the genes functional.</title>
        <authorList>
            <person name="Kugita M."/>
            <person name="Yamamoto Y."/>
            <person name="Fujikawa T."/>
            <person name="Matsumoto T."/>
            <person name="Yoshinaga K."/>
        </authorList>
    </citation>
    <scope>NUCLEOTIDE SEQUENCE [MRNA]</scope>
    <scope>RNA EDITING</scope>
    <source>
        <tissue>Thallus</tissue>
    </source>
</reference>
<evidence type="ECO:0000255" key="1">
    <source>
        <dbReference type="HAMAP-Rule" id="MF_00444"/>
    </source>
</evidence>
<evidence type="ECO:0000269" key="2">
    <source>
    </source>
</evidence>
<evidence type="ECO:0000269" key="3">
    <source>
    </source>
</evidence>
<sequence length="204" mass="22819">MPIGVPKVPFRLPGEEDAVWIDVYNRLYRERLLFLGQHVDDEIANQLIGIMMYLNGEDESKDMYLYINSPGGAVLAGISVYDTMQFVVPDVHTICMGLAASMGSFILTGGEITKRIALPHARIMIHQPASSYYDGQAGECIMEAEEVLKLRDCITKVYVQRTGKPLWVISEDMERDVFMSAKEAQIYGIVDFVAIETTSNSLTN</sequence>
<geneLocation type="chloroplast"/>
<dbReference type="EC" id="3.4.21.92" evidence="1"/>
<dbReference type="EMBL" id="AB086179">
    <property type="protein sequence ID" value="BAC55373.1"/>
    <property type="molecule type" value="Genomic_DNA"/>
</dbReference>
<dbReference type="EMBL" id="AB087461">
    <property type="protein sequence ID" value="BAC55470.1"/>
    <property type="molecule type" value="mRNA"/>
</dbReference>
<dbReference type="RefSeq" id="NP_777437.1">
    <property type="nucleotide sequence ID" value="NC_004543.1"/>
</dbReference>
<dbReference type="SMR" id="Q85BZ1"/>
<dbReference type="MEROPS" id="S14.002"/>
<dbReference type="GeneID" id="2553490"/>
<dbReference type="GO" id="GO:0009570">
    <property type="term" value="C:chloroplast stroma"/>
    <property type="evidence" value="ECO:0007669"/>
    <property type="project" value="UniProtKB-SubCell"/>
</dbReference>
<dbReference type="GO" id="GO:0009368">
    <property type="term" value="C:endopeptidase Clp complex"/>
    <property type="evidence" value="ECO:0007669"/>
    <property type="project" value="TreeGrafter"/>
</dbReference>
<dbReference type="GO" id="GO:0004176">
    <property type="term" value="F:ATP-dependent peptidase activity"/>
    <property type="evidence" value="ECO:0007669"/>
    <property type="project" value="InterPro"/>
</dbReference>
<dbReference type="GO" id="GO:0051117">
    <property type="term" value="F:ATPase binding"/>
    <property type="evidence" value="ECO:0007669"/>
    <property type="project" value="TreeGrafter"/>
</dbReference>
<dbReference type="GO" id="GO:0004252">
    <property type="term" value="F:serine-type endopeptidase activity"/>
    <property type="evidence" value="ECO:0007669"/>
    <property type="project" value="UniProtKB-UniRule"/>
</dbReference>
<dbReference type="GO" id="GO:0006515">
    <property type="term" value="P:protein quality control for misfolded or incompletely synthesized proteins"/>
    <property type="evidence" value="ECO:0007669"/>
    <property type="project" value="TreeGrafter"/>
</dbReference>
<dbReference type="CDD" id="cd07017">
    <property type="entry name" value="S14_ClpP_2"/>
    <property type="match status" value="1"/>
</dbReference>
<dbReference type="FunFam" id="3.90.226.10:FF:000006">
    <property type="entry name" value="ATP-dependent Clp protease proteolytic subunit"/>
    <property type="match status" value="1"/>
</dbReference>
<dbReference type="Gene3D" id="3.90.226.10">
    <property type="entry name" value="2-enoyl-CoA Hydratase, Chain A, domain 1"/>
    <property type="match status" value="1"/>
</dbReference>
<dbReference type="HAMAP" id="MF_00444">
    <property type="entry name" value="ClpP"/>
    <property type="match status" value="1"/>
</dbReference>
<dbReference type="InterPro" id="IPR001907">
    <property type="entry name" value="ClpP"/>
</dbReference>
<dbReference type="InterPro" id="IPR029045">
    <property type="entry name" value="ClpP/crotonase-like_dom_sf"/>
</dbReference>
<dbReference type="InterPro" id="IPR023562">
    <property type="entry name" value="ClpP/TepA"/>
</dbReference>
<dbReference type="InterPro" id="IPR033135">
    <property type="entry name" value="ClpP_His_AS"/>
</dbReference>
<dbReference type="InterPro" id="IPR018215">
    <property type="entry name" value="ClpP_Ser_AS"/>
</dbReference>
<dbReference type="PANTHER" id="PTHR10381">
    <property type="entry name" value="ATP-DEPENDENT CLP PROTEASE PROTEOLYTIC SUBUNIT"/>
    <property type="match status" value="1"/>
</dbReference>
<dbReference type="PANTHER" id="PTHR10381:SF15">
    <property type="entry name" value="CHLOROPLASTIC ATP-DEPENDENT CLP PROTEASE PROTEOLYTIC SUBUNIT 1"/>
    <property type="match status" value="1"/>
</dbReference>
<dbReference type="Pfam" id="PF00574">
    <property type="entry name" value="CLP_protease"/>
    <property type="match status" value="1"/>
</dbReference>
<dbReference type="PRINTS" id="PR00127">
    <property type="entry name" value="CLPPROTEASEP"/>
</dbReference>
<dbReference type="SUPFAM" id="SSF52096">
    <property type="entry name" value="ClpP/crotonase"/>
    <property type="match status" value="1"/>
</dbReference>
<dbReference type="PROSITE" id="PS00382">
    <property type="entry name" value="CLP_PROTEASE_HIS"/>
    <property type="match status" value="1"/>
</dbReference>
<dbReference type="PROSITE" id="PS00381">
    <property type="entry name" value="CLP_PROTEASE_SER"/>
    <property type="match status" value="1"/>
</dbReference>
<accession>Q85BZ1</accession>
<comment type="function">
    <text evidence="1">Cleaves peptides in various proteins in a process that requires ATP hydrolysis. Has a chymotrypsin-like activity. Plays a major role in the degradation of misfolded proteins.</text>
</comment>
<comment type="catalytic activity">
    <reaction evidence="1">
        <text>Hydrolysis of proteins to small peptides in the presence of ATP and magnesium. alpha-casein is the usual test substrate. In the absence of ATP, only oligopeptides shorter than five residues are hydrolyzed (such as succinyl-Leu-Tyr-|-NHMec, and Leu-Tyr-Leu-|-Tyr-Trp, in which cleavage of the -Tyr-|-Leu- and -Tyr-|-Trp bonds also occurs).</text>
        <dbReference type="EC" id="3.4.21.92"/>
    </reaction>
</comment>
<comment type="subunit">
    <text>Component of the chloroplastic Clp protease core complex.</text>
</comment>
<comment type="subcellular location">
    <subcellularLocation>
        <location evidence="1">Plastid</location>
        <location evidence="1">Chloroplast stroma</location>
    </subcellularLocation>
</comment>
<comment type="RNA editing">
    <location>
        <position position="20" evidence="2 3"/>
    </location>
    <location>
        <position position="34" evidence="2 3"/>
    </location>
    <location>
        <position position="37" evidence="2 3"/>
    </location>
    <location>
        <position position="69" evidence="2 3"/>
    </location>
    <location>
        <position position="93" evidence="2 3"/>
    </location>
    <location>
        <position position="105" evidence="2 3"/>
    </location>
    <location>
        <position position="106" evidence="2 3"/>
    </location>
    <location>
        <position position="148" evidence="2 3"/>
    </location>
    <location>
        <position position="173" evidence="2 3"/>
    </location>
    <location>
        <position position="189" evidence="2 3"/>
    </location>
    <location>
        <position position="190" evidence="2 3"/>
    </location>
    <text>The nonsense codon at position 37 is modified to a sense codon.</text>
</comment>
<comment type="similarity">
    <text evidence="1">Belongs to the peptidase S14 family.</text>
</comment>
<organism>
    <name type="scientific">Anthoceros angustus</name>
    <name type="common">Hornwort</name>
    <name type="synonym">Anthoceros formosae</name>
    <dbReference type="NCBI Taxonomy" id="48387"/>
    <lineage>
        <taxon>Eukaryota</taxon>
        <taxon>Viridiplantae</taxon>
        <taxon>Streptophyta</taxon>
        <taxon>Embryophyta</taxon>
        <taxon>Anthocerotophyta</taxon>
        <taxon>Anthocerotopsida</taxon>
        <taxon>Anthocerotidae</taxon>
        <taxon>Anthocerotales</taxon>
        <taxon>Anthocerotaceae</taxon>
        <taxon>Anthoceros</taxon>
    </lineage>
</organism>
<name>CLPP_ANTAG</name>
<feature type="chain" id="PRO_0000179733" description="ATP-dependent Clp protease proteolytic subunit">
    <location>
        <begin position="1"/>
        <end position="204"/>
    </location>
</feature>
<feature type="active site" description="Nucleophile" evidence="1">
    <location>
        <position position="101"/>
    </location>
</feature>
<feature type="active site" evidence="1">
    <location>
        <position position="126"/>
    </location>
</feature>
<gene>
    <name evidence="1" type="primary">clpP</name>
</gene>
<protein>
    <recommendedName>
        <fullName evidence="1">ATP-dependent Clp protease proteolytic subunit</fullName>
        <ecNumber evidence="1">3.4.21.92</ecNumber>
    </recommendedName>
    <alternativeName>
        <fullName evidence="1">Endopeptidase Clp</fullName>
    </alternativeName>
</protein>
<keyword id="KW-0150">Chloroplast</keyword>
<keyword id="KW-0378">Hydrolase</keyword>
<keyword id="KW-0934">Plastid</keyword>
<keyword id="KW-0645">Protease</keyword>
<keyword id="KW-0691">RNA editing</keyword>
<keyword id="KW-0720">Serine protease</keyword>